<organism>
    <name type="scientific">Synechocystis sp. (strain ATCC 27184 / PCC 6803 / Kazusa)</name>
    <dbReference type="NCBI Taxonomy" id="1111708"/>
    <lineage>
        <taxon>Bacteria</taxon>
        <taxon>Bacillati</taxon>
        <taxon>Cyanobacteriota</taxon>
        <taxon>Cyanophyceae</taxon>
        <taxon>Synechococcales</taxon>
        <taxon>Merismopediaceae</taxon>
        <taxon>Synechocystis</taxon>
    </lineage>
</organism>
<accession>Q55986</accession>
<keyword id="KW-0131">Cell cycle</keyword>
<keyword id="KW-0132">Cell division</keyword>
<keyword id="KW-0997">Cell inner membrane</keyword>
<keyword id="KW-1003">Cell membrane</keyword>
<keyword id="KW-0133">Cell shape</keyword>
<keyword id="KW-0961">Cell wall biogenesis/degradation</keyword>
<keyword id="KW-0460">Magnesium</keyword>
<keyword id="KW-0472">Membrane</keyword>
<keyword id="KW-0479">Metal-binding</keyword>
<keyword id="KW-0573">Peptidoglycan synthesis</keyword>
<keyword id="KW-1185">Reference proteome</keyword>
<keyword id="KW-0808">Transferase</keyword>
<keyword id="KW-0812">Transmembrane</keyword>
<keyword id="KW-1133">Transmembrane helix</keyword>
<sequence length="365" mass="38576">MANAKSSSLPSWKNPSGKTLLILLWALALALMALLSSWADMPWLSNGKLLIALGFTALVTALIGMAVVPMLVNLKASQVIQSDGPQSHLKKAGTPTMGGIFFVPVAVAIAVVGTQFNPDVIVVGLVTLGYMAIGWVDDWQILKYKSNKGLTPKQKLFLQVAIAVIFCTWLFFYGPTEITDIRIMQFVLPLGFLFWLVATFALVAESNATNLTDGVDGLAAGTGAIAFVGLGLLVAKENPALAFFCCAMAGGCIGFVHHNHNPARVFMGDTGSLALGGSLAAVGIMTGNLWGLLLISGIFLAESLSVIAQVGYYKATKGPDGVGKRLLKMAPIHHHLELSGWTETQIVGSFYLINTLLAIVAMATA</sequence>
<feature type="chain" id="PRO_0000108916" description="Phospho-N-acetylmuramoyl-pentapeptide-transferase">
    <location>
        <begin position="1"/>
        <end position="365"/>
    </location>
</feature>
<feature type="transmembrane region" description="Helical" evidence="1">
    <location>
        <begin position="19"/>
        <end position="39"/>
    </location>
</feature>
<feature type="transmembrane region" description="Helical" evidence="1">
    <location>
        <begin position="49"/>
        <end position="69"/>
    </location>
</feature>
<feature type="transmembrane region" description="Helical" evidence="1">
    <location>
        <begin position="92"/>
        <end position="112"/>
    </location>
</feature>
<feature type="transmembrane region" description="Helical" evidence="1">
    <location>
        <begin position="116"/>
        <end position="136"/>
    </location>
</feature>
<feature type="transmembrane region" description="Helical" evidence="1">
    <location>
        <begin position="156"/>
        <end position="176"/>
    </location>
</feature>
<feature type="transmembrane region" description="Helical" evidence="1">
    <location>
        <begin position="183"/>
        <end position="203"/>
    </location>
</feature>
<feature type="transmembrane region" description="Helical" evidence="1">
    <location>
        <begin position="215"/>
        <end position="235"/>
    </location>
</feature>
<feature type="transmembrane region" description="Helical" evidence="1">
    <location>
        <begin position="238"/>
        <end position="258"/>
    </location>
</feature>
<feature type="transmembrane region" description="Helical" evidence="1">
    <location>
        <begin position="279"/>
        <end position="299"/>
    </location>
</feature>
<feature type="transmembrane region" description="Helical" evidence="1">
    <location>
        <begin position="345"/>
        <end position="365"/>
    </location>
</feature>
<dbReference type="EC" id="2.7.8.13" evidence="1"/>
<dbReference type="EMBL" id="BA000022">
    <property type="protein sequence ID" value="BAA10768.1"/>
    <property type="molecule type" value="Genomic_DNA"/>
</dbReference>
<dbReference type="PIR" id="S77076">
    <property type="entry name" value="S77076"/>
</dbReference>
<dbReference type="SMR" id="Q55986"/>
<dbReference type="FunCoup" id="Q55986">
    <property type="interactions" value="446"/>
</dbReference>
<dbReference type="IntAct" id="Q55986">
    <property type="interactions" value="2"/>
</dbReference>
<dbReference type="STRING" id="1148.gene:10500272"/>
<dbReference type="PaxDb" id="1148-1006612"/>
<dbReference type="EnsemblBacteria" id="BAA10768">
    <property type="protein sequence ID" value="BAA10768"/>
    <property type="gene ID" value="BAA10768"/>
</dbReference>
<dbReference type="KEGG" id="syn:sll0657"/>
<dbReference type="eggNOG" id="COG0472">
    <property type="taxonomic scope" value="Bacteria"/>
</dbReference>
<dbReference type="InParanoid" id="Q55986"/>
<dbReference type="PhylomeDB" id="Q55986"/>
<dbReference type="UniPathway" id="UPA00219"/>
<dbReference type="Proteomes" id="UP000001425">
    <property type="component" value="Chromosome"/>
</dbReference>
<dbReference type="GO" id="GO:0005886">
    <property type="term" value="C:plasma membrane"/>
    <property type="evidence" value="ECO:0000318"/>
    <property type="project" value="GO_Central"/>
</dbReference>
<dbReference type="GO" id="GO:0046872">
    <property type="term" value="F:metal ion binding"/>
    <property type="evidence" value="ECO:0007669"/>
    <property type="project" value="UniProtKB-KW"/>
</dbReference>
<dbReference type="GO" id="GO:0008963">
    <property type="term" value="F:phospho-N-acetylmuramoyl-pentapeptide-transferase activity"/>
    <property type="evidence" value="ECO:0007669"/>
    <property type="project" value="UniProtKB-UniRule"/>
</dbReference>
<dbReference type="GO" id="GO:0016780">
    <property type="term" value="F:phosphotransferase activity, for other substituted phosphate groups"/>
    <property type="evidence" value="ECO:0000318"/>
    <property type="project" value="GO_Central"/>
</dbReference>
<dbReference type="GO" id="GO:0051992">
    <property type="term" value="F:UDP-N-acetylmuramoyl-L-alanyl-D-glutamyl-meso-2,6-diaminopimelyl-D-alanyl-D-alanine:undecaprenyl-phosphate transferase activity"/>
    <property type="evidence" value="ECO:0007669"/>
    <property type="project" value="RHEA"/>
</dbReference>
<dbReference type="GO" id="GO:0051301">
    <property type="term" value="P:cell division"/>
    <property type="evidence" value="ECO:0007669"/>
    <property type="project" value="UniProtKB-KW"/>
</dbReference>
<dbReference type="GO" id="GO:0044038">
    <property type="term" value="P:cell wall macromolecule biosynthetic process"/>
    <property type="evidence" value="ECO:0000318"/>
    <property type="project" value="GO_Central"/>
</dbReference>
<dbReference type="GO" id="GO:0071555">
    <property type="term" value="P:cell wall organization"/>
    <property type="evidence" value="ECO:0000318"/>
    <property type="project" value="GO_Central"/>
</dbReference>
<dbReference type="GO" id="GO:0009252">
    <property type="term" value="P:peptidoglycan biosynthetic process"/>
    <property type="evidence" value="ECO:0007669"/>
    <property type="project" value="UniProtKB-UniRule"/>
</dbReference>
<dbReference type="GO" id="GO:0008360">
    <property type="term" value="P:regulation of cell shape"/>
    <property type="evidence" value="ECO:0007669"/>
    <property type="project" value="UniProtKB-KW"/>
</dbReference>
<dbReference type="CDD" id="cd06852">
    <property type="entry name" value="GT_MraY"/>
    <property type="match status" value="1"/>
</dbReference>
<dbReference type="HAMAP" id="MF_00038">
    <property type="entry name" value="MraY"/>
    <property type="match status" value="1"/>
</dbReference>
<dbReference type="InterPro" id="IPR000715">
    <property type="entry name" value="Glycosyl_transferase_4"/>
</dbReference>
<dbReference type="InterPro" id="IPR003524">
    <property type="entry name" value="PNAcMuramoyl-5peptid_Trfase"/>
</dbReference>
<dbReference type="InterPro" id="IPR018480">
    <property type="entry name" value="PNAcMuramoyl-5peptid_Trfase_CS"/>
</dbReference>
<dbReference type="NCBIfam" id="TIGR00445">
    <property type="entry name" value="mraY"/>
    <property type="match status" value="1"/>
</dbReference>
<dbReference type="PANTHER" id="PTHR22926">
    <property type="entry name" value="PHOSPHO-N-ACETYLMURAMOYL-PENTAPEPTIDE-TRANSFERASE"/>
    <property type="match status" value="1"/>
</dbReference>
<dbReference type="PANTHER" id="PTHR22926:SF5">
    <property type="entry name" value="PHOSPHO-N-ACETYLMURAMOYL-PENTAPEPTIDE-TRANSFERASE HOMOLOG"/>
    <property type="match status" value="1"/>
</dbReference>
<dbReference type="Pfam" id="PF00953">
    <property type="entry name" value="Glycos_transf_4"/>
    <property type="match status" value="1"/>
</dbReference>
<dbReference type="Pfam" id="PF10555">
    <property type="entry name" value="MraY_sig1"/>
    <property type="match status" value="1"/>
</dbReference>
<dbReference type="PROSITE" id="PS01347">
    <property type="entry name" value="MRAY_1"/>
    <property type="match status" value="1"/>
</dbReference>
<dbReference type="PROSITE" id="PS01348">
    <property type="entry name" value="MRAY_2"/>
    <property type="match status" value="1"/>
</dbReference>
<evidence type="ECO:0000255" key="1">
    <source>
        <dbReference type="HAMAP-Rule" id="MF_00038"/>
    </source>
</evidence>
<name>MRAY_SYNY3</name>
<protein>
    <recommendedName>
        <fullName evidence="1">Phospho-N-acetylmuramoyl-pentapeptide-transferase</fullName>
        <ecNumber evidence="1">2.7.8.13</ecNumber>
    </recommendedName>
    <alternativeName>
        <fullName evidence="1">UDP-MurNAc-pentapeptide phosphotransferase</fullName>
    </alternativeName>
</protein>
<reference key="1">
    <citation type="journal article" date="1995" name="DNA Res.">
        <title>Sequence analysis of the genome of the unicellular cyanobacterium Synechocystis sp. strain PCC6803. I. Sequence features in the 1 Mb region from map positions 64% to 92% of the genome.</title>
        <authorList>
            <person name="Kaneko T."/>
            <person name="Tanaka A."/>
            <person name="Sato S."/>
            <person name="Kotani H."/>
            <person name="Sazuka T."/>
            <person name="Miyajima N."/>
            <person name="Sugiura M."/>
            <person name="Tabata S."/>
        </authorList>
    </citation>
    <scope>NUCLEOTIDE SEQUENCE [LARGE SCALE GENOMIC DNA]</scope>
    <source>
        <strain>ATCC 27184 / PCC 6803 / N-1</strain>
    </source>
</reference>
<reference key="2">
    <citation type="journal article" date="1996" name="DNA Res.">
        <title>Sequence analysis of the genome of the unicellular cyanobacterium Synechocystis sp. strain PCC6803. II. Sequence determination of the entire genome and assignment of potential protein-coding regions.</title>
        <authorList>
            <person name="Kaneko T."/>
            <person name="Sato S."/>
            <person name="Kotani H."/>
            <person name="Tanaka A."/>
            <person name="Asamizu E."/>
            <person name="Nakamura Y."/>
            <person name="Miyajima N."/>
            <person name="Hirosawa M."/>
            <person name="Sugiura M."/>
            <person name="Sasamoto S."/>
            <person name="Kimura T."/>
            <person name="Hosouchi T."/>
            <person name="Matsuno A."/>
            <person name="Muraki A."/>
            <person name="Nakazaki N."/>
            <person name="Naruo K."/>
            <person name="Okumura S."/>
            <person name="Shimpo S."/>
            <person name="Takeuchi C."/>
            <person name="Wada T."/>
            <person name="Watanabe A."/>
            <person name="Yamada M."/>
            <person name="Yasuda M."/>
            <person name="Tabata S."/>
        </authorList>
    </citation>
    <scope>NUCLEOTIDE SEQUENCE [LARGE SCALE GENOMIC DNA]</scope>
    <source>
        <strain>ATCC 27184 / PCC 6803 / Kazusa</strain>
    </source>
</reference>
<proteinExistence type="inferred from homology"/>
<gene>
    <name evidence="1" type="primary">mraY</name>
    <name type="ordered locus">sll0657</name>
</gene>
<comment type="function">
    <text evidence="1">Catalyzes the initial step of the lipid cycle reactions in the biosynthesis of the cell wall peptidoglycan: transfers peptidoglycan precursor phospho-MurNAc-pentapeptide from UDP-MurNAc-pentapeptide onto the lipid carrier undecaprenyl phosphate, yielding undecaprenyl-pyrophosphoryl-MurNAc-pentapeptide, known as lipid I.</text>
</comment>
<comment type="catalytic activity">
    <reaction evidence="1">
        <text>UDP-N-acetyl-alpha-D-muramoyl-L-alanyl-gamma-D-glutamyl-meso-2,6-diaminopimeloyl-D-alanyl-D-alanine + di-trans,octa-cis-undecaprenyl phosphate = di-trans,octa-cis-undecaprenyl diphospho-N-acetyl-alpha-D-muramoyl-L-alanyl-D-glutamyl-meso-2,6-diaminopimeloyl-D-alanyl-D-alanine + UMP</text>
        <dbReference type="Rhea" id="RHEA:28386"/>
        <dbReference type="ChEBI" id="CHEBI:57865"/>
        <dbReference type="ChEBI" id="CHEBI:60392"/>
        <dbReference type="ChEBI" id="CHEBI:61386"/>
        <dbReference type="ChEBI" id="CHEBI:61387"/>
        <dbReference type="EC" id="2.7.8.13"/>
    </reaction>
</comment>
<comment type="cofactor">
    <cofactor evidence="1">
        <name>Mg(2+)</name>
        <dbReference type="ChEBI" id="CHEBI:18420"/>
    </cofactor>
</comment>
<comment type="pathway">
    <text evidence="1">Cell wall biogenesis; peptidoglycan biosynthesis.</text>
</comment>
<comment type="subcellular location">
    <subcellularLocation>
        <location evidence="1">Cell inner membrane</location>
        <topology evidence="1">Multi-pass membrane protein</topology>
    </subcellularLocation>
</comment>
<comment type="similarity">
    <text evidence="1">Belongs to the glycosyltransferase 4 family. MraY subfamily.</text>
</comment>